<feature type="chain" id="PRO_0000222534" description="Capsid protein">
    <location>
        <begin position="1"/>
        <end position="196"/>
    </location>
</feature>
<feature type="region of interest" description="RNA-binding" evidence="2">
    <location>
        <begin position="1"/>
        <end position="19"/>
    </location>
</feature>
<feature type="binding site" evidence="1">
    <location>
        <position position="26"/>
    </location>
    <ligand>
        <name>Ca(2+)</name>
        <dbReference type="ChEBI" id="CHEBI:29108"/>
        <label>1</label>
    </ligand>
</feature>
<feature type="binding site" evidence="1">
    <location>
        <position position="26"/>
    </location>
    <ligand>
        <name>Ca(2+)</name>
        <dbReference type="ChEBI" id="CHEBI:29108"/>
        <label>2</label>
    </ligand>
</feature>
<feature type="binding site" evidence="1">
    <location>
        <position position="26"/>
    </location>
    <ligand>
        <name>Ca(2+)</name>
        <dbReference type="ChEBI" id="CHEBI:29108"/>
        <label>3</label>
    </ligand>
</feature>
<feature type="binding site" evidence="1">
    <location>
        <position position="56"/>
    </location>
    <ligand>
        <name>Ca(2+)</name>
        <dbReference type="ChEBI" id="CHEBI:29108"/>
        <label>1</label>
    </ligand>
</feature>
<feature type="binding site" evidence="1">
    <location>
        <position position="56"/>
    </location>
    <ligand>
        <name>Ca(2+)</name>
        <dbReference type="ChEBI" id="CHEBI:29108"/>
        <label>2</label>
    </ligand>
</feature>
<feature type="binding site" evidence="1">
    <location>
        <position position="56"/>
    </location>
    <ligand>
        <name>Ca(2+)</name>
        <dbReference type="ChEBI" id="CHEBI:29108"/>
        <label>3</label>
    </ligand>
</feature>
<feature type="binding site" evidence="1 2">
    <location>
        <position position="62"/>
    </location>
    <ligand>
        <name>Ca(2+)</name>
        <dbReference type="ChEBI" id="CHEBI:29108"/>
        <label>1</label>
    </ligand>
</feature>
<feature type="binding site" evidence="1 2">
    <location>
        <position position="65"/>
    </location>
    <ligand>
        <name>Ca(2+)</name>
        <dbReference type="ChEBI" id="CHEBI:29108"/>
        <label>1</label>
    </ligand>
</feature>
<feature type="binding site" evidence="1">
    <location>
        <position position="139"/>
    </location>
    <ligand>
        <name>Ca(2+)</name>
        <dbReference type="ChEBI" id="CHEBI:29108"/>
        <label>1</label>
    </ligand>
</feature>
<feature type="binding site" evidence="1">
    <location>
        <position position="139"/>
    </location>
    <ligand>
        <name>Ca(2+)</name>
        <dbReference type="ChEBI" id="CHEBI:29108"/>
        <label>2</label>
    </ligand>
</feature>
<feature type="binding site" evidence="1">
    <location>
        <position position="139"/>
    </location>
    <ligand>
        <name>Ca(2+)</name>
        <dbReference type="ChEBI" id="CHEBI:29108"/>
        <label>3</label>
    </ligand>
</feature>
<feature type="binding site" evidence="1 2">
    <location>
        <position position="195"/>
    </location>
    <ligand>
        <name>Ca(2+)</name>
        <dbReference type="ChEBI" id="CHEBI:29108"/>
        <label>1</label>
    </ligand>
</feature>
<feature type="helix" evidence="9">
    <location>
        <begin position="11"/>
        <end position="23"/>
    </location>
</feature>
<feature type="strand" evidence="9">
    <location>
        <begin position="28"/>
        <end position="38"/>
    </location>
</feature>
<feature type="strand" evidence="9">
    <location>
        <begin position="44"/>
        <end position="49"/>
    </location>
</feature>
<feature type="strand" evidence="9">
    <location>
        <begin position="54"/>
        <end position="57"/>
    </location>
</feature>
<feature type="strand" evidence="9">
    <location>
        <begin position="60"/>
        <end position="62"/>
    </location>
</feature>
<feature type="strand" evidence="9">
    <location>
        <begin position="65"/>
        <end position="78"/>
    </location>
</feature>
<feature type="strand" evidence="9">
    <location>
        <begin position="84"/>
        <end position="93"/>
    </location>
</feature>
<feature type="strand" evidence="9">
    <location>
        <begin position="97"/>
        <end position="99"/>
    </location>
</feature>
<feature type="helix" evidence="9">
    <location>
        <begin position="103"/>
        <end position="106"/>
    </location>
</feature>
<feature type="strand" evidence="9">
    <location>
        <begin position="107"/>
        <end position="111"/>
    </location>
</feature>
<feature type="helix" evidence="9">
    <location>
        <begin position="118"/>
        <end position="122"/>
    </location>
</feature>
<feature type="strand" evidence="9">
    <location>
        <begin position="125"/>
        <end position="136"/>
    </location>
</feature>
<feature type="strand" evidence="8">
    <location>
        <begin position="138"/>
        <end position="140"/>
    </location>
</feature>
<feature type="strand" evidence="9">
    <location>
        <begin position="143"/>
        <end position="151"/>
    </location>
</feature>
<feature type="strand" evidence="9">
    <location>
        <begin position="154"/>
        <end position="163"/>
    </location>
</feature>
<feature type="helix" evidence="9">
    <location>
        <begin position="164"/>
        <end position="166"/>
    </location>
</feature>
<feature type="strand" evidence="9">
    <location>
        <begin position="172"/>
        <end position="179"/>
    </location>
</feature>
<feature type="strand" evidence="9">
    <location>
        <begin position="184"/>
        <end position="194"/>
    </location>
</feature>
<proteinExistence type="evidence at protein level"/>
<organism>
    <name type="scientific">Satellite tobacco necrosis virus 1</name>
    <dbReference type="NCBI Taxonomy" id="12445"/>
    <lineage>
        <taxon>Viruses</taxon>
        <taxon>Riboviria</taxon>
        <taxon>Albetovirus</taxon>
        <taxon>Tobacco albetovirus 1</taxon>
    </lineage>
</organism>
<reference key="1">
    <citation type="journal article" date="1980" name="J. Mol. Biol.">
        <title>Total nucleotide sequence of a nearly full-size DNA copy of satellite tobacco necrosis virus RNA.</title>
        <authorList>
            <person name="Ysebaert M."/>
            <person name="van Emmelo J."/>
            <person name="Fiers W."/>
        </authorList>
    </citation>
    <scope>NUCLEOTIDE SEQUENCE [GENOMIC RNA]</scope>
</reference>
<reference key="2">
    <citation type="journal article" date="1984" name="J. Mol. Biol.">
        <title>Structure of satellite tobacco necrosis virus after crystallographic refinement at 2.5-A resolution.</title>
        <authorList>
            <person name="Jones T.A."/>
            <person name="Liljas L."/>
        </authorList>
    </citation>
    <scope>X-RAY CRYSTALLOGRAPHY (2.5 ANGSTROMS)</scope>
    <scope>FUNCTION</scope>
</reference>
<reference evidence="5 7" key="3">
    <citation type="journal article" date="2011" name="J. Mol. Biol.">
        <title>Construction and crystal structure of recombinant STNV capsids.</title>
        <authorList>
            <person name="Lane S.W."/>
            <person name="Dennis C.A."/>
            <person name="Lane C.L."/>
            <person name="Trinh C.H."/>
            <person name="Rizkallah P.J."/>
            <person name="Stockley P.G."/>
            <person name="Phillips S.E."/>
        </authorList>
    </citation>
    <scope>X-RAY CRYSTALLOGRAPHY (1.45 ANGSTROMS) IN COMPLEX WITH CALCIUM</scope>
    <scope>FUNCTION</scope>
    <scope>COFACTOR</scope>
</reference>
<reference evidence="6" key="4">
    <citation type="journal article" date="2013" name="J. Mol. Biol.">
        <title>Sequence-specific, RNA-protein interactions overcome electrostatic barriers preventing assembly of satellite tobacco necrosis virus coat protein.</title>
        <authorList>
            <person name="Ford R.J."/>
            <person name="Barker A.M."/>
            <person name="Bakker S.E."/>
            <person name="Coutts R.H."/>
            <person name="Ranson N.A."/>
            <person name="Phillips S.E."/>
            <person name="Pearson A.R."/>
            <person name="Stockley P.G."/>
        </authorList>
    </citation>
    <scope>X-RAY CRYSTALLOGRAPHY (2.29 ANGSTROMS) IN COMPLEX WITH CALCIUM</scope>
    <scope>FUNCTION</scope>
    <scope>RNA-BINDING</scope>
</reference>
<organismHost>
    <name type="scientific">Phaseolus vulgaris</name>
    <name type="common">Kidney bean</name>
    <name type="synonym">French bean</name>
    <dbReference type="NCBI Taxonomy" id="3885"/>
</organismHost>
<organismHost>
    <name type="scientific">Tulipa gesneriana</name>
    <name type="common">Garden tulip</name>
    <dbReference type="NCBI Taxonomy" id="13306"/>
</organismHost>
<name>CAPSD_STNV1</name>
<sequence length="196" mass="21715">MAKQQNNRRKSATMRAVKRMINTHLEHKRFALINSGNTNATAGTVQNLSNGIIQGDDINQRSGDQVRIVSHKLHVRGTAITVSQTFRFIWFRDNMNRGTTPTVLEVLNTANFMSQYNPITLQQKRFTILKDVTLNCSLTGESIKDRIINLPGQLVNYNGATAVAASNGPGAIFMLQIGDSLVGLWDSSYEAVYTDA</sequence>
<evidence type="ECO:0000269" key="1">
    <source>
    </source>
</evidence>
<evidence type="ECO:0000269" key="2">
    <source>
    </source>
</evidence>
<evidence type="ECO:0000269" key="3">
    <source>
    </source>
</evidence>
<evidence type="ECO:0000305" key="4"/>
<evidence type="ECO:0007744" key="5">
    <source>
        <dbReference type="PDB" id="3S4G"/>
    </source>
</evidence>
<evidence type="ECO:0007744" key="6">
    <source>
        <dbReference type="PDB" id="4BCU"/>
    </source>
</evidence>
<evidence type="ECO:0007744" key="7">
    <source>
        <dbReference type="PDB" id="4V4M"/>
    </source>
</evidence>
<evidence type="ECO:0007829" key="8">
    <source>
        <dbReference type="PDB" id="2BUK"/>
    </source>
</evidence>
<evidence type="ECO:0007829" key="9">
    <source>
        <dbReference type="PDB" id="4BCU"/>
    </source>
</evidence>
<comment type="function">
    <text evidence="1 2 3">Self-assembles to form an icosahedral capsid of 17 nm in diameter.</text>
</comment>
<comment type="cofactor">
    <cofactor>
        <name>Ca(2+)</name>
        <dbReference type="ChEBI" id="CHEBI:29108"/>
    </cofactor>
    <text evidence="1">Binds 3 Ca(2+) ions per subunit.</text>
</comment>
<comment type="subcellular location">
    <subcellularLocation>
        <location evidence="4">Virion</location>
    </subcellularLocation>
</comment>
<dbReference type="EMBL" id="V01468">
    <property type="protein sequence ID" value="CAA24714.1"/>
    <property type="molecule type" value="Genomic_RNA"/>
</dbReference>
<dbReference type="PDB" id="2BUK">
    <property type="method" value="X-ray"/>
    <property type="resolution" value="2.45 A"/>
    <property type="chains" value="A=1-196"/>
</dbReference>
<dbReference type="PDB" id="3S4G">
    <property type="method" value="X-ray"/>
    <property type="resolution" value="6.00 A"/>
    <property type="chains" value="A=1-196"/>
</dbReference>
<dbReference type="PDB" id="4BCU">
    <property type="method" value="X-ray"/>
    <property type="resolution" value="2.29 A"/>
    <property type="chains" value="A=1-196"/>
</dbReference>
<dbReference type="PDB" id="4V4M">
    <property type="method" value="X-ray"/>
    <property type="resolution" value="1.45 A"/>
    <property type="chains" value="0/1/2/3/4/5/6/7/A/B/C/D/E/F/G/H/I/J/K/L/M/N/O/P/Q/R/S/T/U/V/W/X/Y/Z/a/b/c/d/e/f/g/h/i/j/k/l/m/n/o/p/q/r/s/t/u/v/w/x/y/z=1-196"/>
</dbReference>
<dbReference type="PDBsum" id="2BUK"/>
<dbReference type="PDBsum" id="3S4G"/>
<dbReference type="PDBsum" id="4BCU"/>
<dbReference type="PDBsum" id="4V4M"/>
<dbReference type="SMR" id="P03606"/>
<dbReference type="KEGG" id="vg:1494489"/>
<dbReference type="EvolutionaryTrace" id="P03606"/>
<dbReference type="Proteomes" id="UP000211161">
    <property type="component" value="Segment"/>
</dbReference>
<dbReference type="GO" id="GO:0019028">
    <property type="term" value="C:viral capsid"/>
    <property type="evidence" value="ECO:0007669"/>
    <property type="project" value="UniProtKB-KW"/>
</dbReference>
<dbReference type="GO" id="GO:0046872">
    <property type="term" value="F:metal ion binding"/>
    <property type="evidence" value="ECO:0007669"/>
    <property type="project" value="UniProtKB-KW"/>
</dbReference>
<dbReference type="GO" id="GO:0003723">
    <property type="term" value="F:RNA binding"/>
    <property type="evidence" value="ECO:0007669"/>
    <property type="project" value="UniProtKB-KW"/>
</dbReference>
<dbReference type="GO" id="GO:0005198">
    <property type="term" value="F:structural molecule activity"/>
    <property type="evidence" value="ECO:0007669"/>
    <property type="project" value="InterPro"/>
</dbReference>
<dbReference type="CDD" id="cd00259">
    <property type="entry name" value="STNV"/>
    <property type="match status" value="1"/>
</dbReference>
<dbReference type="Gene3D" id="2.60.120.20">
    <property type="match status" value="1"/>
</dbReference>
<dbReference type="InterPro" id="IPR005597">
    <property type="entry name" value="Satellite_CP-like"/>
</dbReference>
<dbReference type="InterPro" id="IPR010392">
    <property type="entry name" value="Satellite_virus_coat"/>
</dbReference>
<dbReference type="InterPro" id="IPR037164">
    <property type="entry name" value="Satellite_virus_coat_sf"/>
</dbReference>
<dbReference type="InterPro" id="IPR029053">
    <property type="entry name" value="Viral_coat"/>
</dbReference>
<dbReference type="Pfam" id="PF03898">
    <property type="entry name" value="TNV_CP"/>
    <property type="match status" value="1"/>
</dbReference>
<dbReference type="PIRSF" id="PIRSF004094">
    <property type="entry name" value="Satellite_CP"/>
    <property type="match status" value="1"/>
</dbReference>
<dbReference type="SUPFAM" id="SSF88650">
    <property type="entry name" value="Satellite viruses"/>
    <property type="match status" value="1"/>
</dbReference>
<keyword id="KW-0002">3D-structure</keyword>
<keyword id="KW-0106">Calcium</keyword>
<keyword id="KW-0167">Capsid protein</keyword>
<keyword id="KW-0479">Metal-binding</keyword>
<keyword id="KW-1185">Reference proteome</keyword>
<keyword id="KW-0694">RNA-binding</keyword>
<keyword id="KW-0946">Virion</keyword>
<protein>
    <recommendedName>
        <fullName evidence="4">Capsid protein</fullName>
    </recommendedName>
    <alternativeName>
        <fullName evidence="4">Coat protein</fullName>
    </alternativeName>
</protein>
<accession>P03606</accession>